<organism>
    <name type="scientific">Caenorhabditis elegans</name>
    <dbReference type="NCBI Taxonomy" id="6239"/>
    <lineage>
        <taxon>Eukaryota</taxon>
        <taxon>Metazoa</taxon>
        <taxon>Ecdysozoa</taxon>
        <taxon>Nematoda</taxon>
        <taxon>Chromadorea</taxon>
        <taxon>Rhabditida</taxon>
        <taxon>Rhabditina</taxon>
        <taxon>Rhabditomorpha</taxon>
        <taxon>Rhabditoidea</taxon>
        <taxon>Rhabditidae</taxon>
        <taxon>Peloderinae</taxon>
        <taxon>Caenorhabditis</taxon>
    </lineage>
</organism>
<keyword id="KW-0009">Actin-binding</keyword>
<keyword id="KW-0175">Coiled coil</keyword>
<keyword id="KW-0963">Cytoplasm</keyword>
<keyword id="KW-0206">Cytoskeleton</keyword>
<keyword id="KW-0472">Membrane</keyword>
<keyword id="KW-0539">Nucleus</keyword>
<keyword id="KW-1185">Reference proteome</keyword>
<keyword id="KW-0677">Repeat</keyword>
<keyword id="KW-0812">Transmembrane</keyword>
<keyword id="KW-1133">Transmembrane helix</keyword>
<feature type="chain" id="PRO_0000163593" description="Nuclear anchorage protein 1">
    <location>
        <begin position="1"/>
        <end position="8545"/>
    </location>
</feature>
<feature type="topological domain" description="Cytoplasmic" evidence="3">
    <location>
        <begin position="1"/>
        <end position="8494"/>
    </location>
</feature>
<feature type="transmembrane region" description="Helical; Anchor for type IV membrane protein" evidence="3">
    <location>
        <begin position="8495"/>
        <end position="8513"/>
    </location>
</feature>
<feature type="topological domain" description="Perinuclear space" evidence="3">
    <location>
        <begin position="8514"/>
        <end position="8545"/>
    </location>
</feature>
<feature type="domain" description="Calponin-homology (CH) 1" evidence="2">
    <location>
        <begin position="23"/>
        <end position="130"/>
    </location>
</feature>
<feature type="domain" description="Calponin-homology (CH) 2" evidence="2">
    <location>
        <begin position="222"/>
        <end position="328"/>
    </location>
</feature>
<feature type="repeat" description="1">
    <location>
        <begin position="3241"/>
        <end position="4143"/>
    </location>
</feature>
<feature type="repeat" description="2">
    <location>
        <begin position="4144"/>
        <end position="5097"/>
    </location>
</feature>
<feature type="repeat" description="3">
    <location>
        <begin position="5098"/>
        <end position="6000"/>
    </location>
</feature>
<feature type="repeat" description="4">
    <location>
        <begin position="6001"/>
        <end position="6903"/>
    </location>
</feature>
<feature type="repeat" description="5">
    <location>
        <begin position="6904"/>
        <end position="7806"/>
    </location>
</feature>
<feature type="repeat" description="6">
    <location>
        <begin position="7807"/>
        <end position="8199"/>
    </location>
</feature>
<feature type="domain" description="KASH" evidence="3">
    <location>
        <begin position="8486"/>
        <end position="8545"/>
    </location>
</feature>
<feature type="region of interest" description="Actin-binding">
    <location>
        <begin position="1"/>
        <end position="325"/>
    </location>
</feature>
<feature type="region of interest" description="Disordered" evidence="4">
    <location>
        <begin position="148"/>
        <end position="197"/>
    </location>
</feature>
<feature type="region of interest" description="Disordered" evidence="4">
    <location>
        <begin position="3010"/>
        <end position="3033"/>
    </location>
</feature>
<feature type="region of interest" description="6 X tandem repeat">
    <location>
        <begin position="3241"/>
        <end position="8199"/>
    </location>
</feature>
<feature type="region of interest" description="Disordered" evidence="4">
    <location>
        <begin position="3913"/>
        <end position="3936"/>
    </location>
</feature>
<feature type="region of interest" description="Disordered" evidence="4">
    <location>
        <begin position="4372"/>
        <end position="4395"/>
    </location>
</feature>
<feature type="region of interest" description="Disordered" evidence="4">
    <location>
        <begin position="4867"/>
        <end position="4890"/>
    </location>
</feature>
<feature type="region of interest" description="Disordered" evidence="4">
    <location>
        <begin position="5770"/>
        <end position="5793"/>
    </location>
</feature>
<feature type="region of interest" description="Disordered" evidence="4">
    <location>
        <begin position="6673"/>
        <end position="6696"/>
    </location>
</feature>
<feature type="region of interest" description="Disordered" evidence="4">
    <location>
        <begin position="7576"/>
        <end position="7599"/>
    </location>
</feature>
<feature type="region of interest" description="Disordered" evidence="4">
    <location>
        <begin position="8391"/>
        <end position="8418"/>
    </location>
</feature>
<feature type="region of interest" description="Disordered" evidence="4">
    <location>
        <begin position="8449"/>
        <end position="8480"/>
    </location>
</feature>
<feature type="coiled-coil region" evidence="1">
    <location>
        <begin position="754"/>
        <end position="774"/>
    </location>
</feature>
<feature type="coiled-coil region" evidence="1">
    <location>
        <begin position="1072"/>
        <end position="1101"/>
    </location>
</feature>
<feature type="coiled-coil region" evidence="1">
    <location>
        <begin position="1215"/>
        <end position="1236"/>
    </location>
</feature>
<feature type="coiled-coil region" evidence="1">
    <location>
        <begin position="1324"/>
        <end position="1384"/>
    </location>
</feature>
<feature type="coiled-coil region" evidence="1">
    <location>
        <begin position="1574"/>
        <end position="1629"/>
    </location>
</feature>
<feature type="coiled-coil region" evidence="1">
    <location>
        <begin position="1725"/>
        <end position="1754"/>
    </location>
</feature>
<feature type="coiled-coil region" evidence="1">
    <location>
        <begin position="1950"/>
        <end position="1981"/>
    </location>
</feature>
<feature type="coiled-coil region" evidence="1">
    <location>
        <begin position="2103"/>
        <end position="2580"/>
    </location>
</feature>
<feature type="coiled-coil region" evidence="1">
    <location>
        <begin position="2682"/>
        <end position="2712"/>
    </location>
</feature>
<feature type="coiled-coil region" evidence="1">
    <location>
        <begin position="2852"/>
        <end position="2949"/>
    </location>
</feature>
<feature type="coiled-coil region" evidence="1">
    <location>
        <begin position="3002"/>
        <end position="3119"/>
    </location>
</feature>
<feature type="coiled-coil region" evidence="1">
    <location>
        <begin position="3178"/>
        <end position="3295"/>
    </location>
</feature>
<feature type="coiled-coil region" evidence="1">
    <location>
        <begin position="3346"/>
        <end position="3417"/>
    </location>
</feature>
<feature type="coiled-coil region" evidence="1">
    <location>
        <begin position="3482"/>
        <end position="3552"/>
    </location>
</feature>
<feature type="coiled-coil region" evidence="1">
    <location>
        <begin position="3587"/>
        <end position="3703"/>
    </location>
</feature>
<feature type="coiled-coil region" evidence="1">
    <location>
        <begin position="3781"/>
        <end position="3839"/>
    </location>
</feature>
<feature type="coiled-coil region" evidence="1">
    <location>
        <begin position="3902"/>
        <end position="4022"/>
    </location>
</feature>
<feature type="coiled-coil region" evidence="1">
    <location>
        <begin position="4114"/>
        <end position="4198"/>
    </location>
</feature>
<feature type="coiled-coil region" evidence="1">
    <location>
        <begin position="4249"/>
        <end position="4320"/>
    </location>
</feature>
<feature type="coiled-coil region" evidence="1">
    <location>
        <begin position="4436"/>
        <end position="4506"/>
    </location>
</feature>
<feature type="coiled-coil region" evidence="1">
    <location>
        <begin position="4541"/>
        <end position="4657"/>
    </location>
</feature>
<feature type="coiled-coil region" evidence="1">
    <location>
        <begin position="4735"/>
        <end position="4793"/>
    </location>
</feature>
<feature type="coiled-coil region" evidence="1">
    <location>
        <begin position="4856"/>
        <end position="4976"/>
    </location>
</feature>
<feature type="coiled-coil region" evidence="1">
    <location>
        <begin position="5035"/>
        <end position="5152"/>
    </location>
</feature>
<feature type="coiled-coil region" evidence="1">
    <location>
        <begin position="5203"/>
        <end position="5274"/>
    </location>
</feature>
<feature type="coiled-coil region" evidence="1">
    <location>
        <begin position="5339"/>
        <end position="5409"/>
    </location>
</feature>
<feature type="coiled-coil region" evidence="1">
    <location>
        <begin position="5444"/>
        <end position="5560"/>
    </location>
</feature>
<feature type="coiled-coil region" evidence="1">
    <location>
        <begin position="5638"/>
        <end position="5696"/>
    </location>
</feature>
<feature type="coiled-coil region" evidence="1">
    <location>
        <begin position="5759"/>
        <end position="5879"/>
    </location>
</feature>
<feature type="coiled-coil region" evidence="1">
    <location>
        <begin position="5938"/>
        <end position="6055"/>
    </location>
</feature>
<feature type="coiled-coil region" evidence="1">
    <location>
        <begin position="6106"/>
        <end position="6177"/>
    </location>
</feature>
<feature type="coiled-coil region" evidence="1">
    <location>
        <begin position="6242"/>
        <end position="6312"/>
    </location>
</feature>
<feature type="coiled-coil region" evidence="1">
    <location>
        <begin position="6347"/>
        <end position="6463"/>
    </location>
</feature>
<feature type="coiled-coil region" evidence="1">
    <location>
        <begin position="6541"/>
        <end position="6599"/>
    </location>
</feature>
<feature type="coiled-coil region" evidence="1">
    <location>
        <begin position="6662"/>
        <end position="6782"/>
    </location>
</feature>
<feature type="coiled-coil region" evidence="1">
    <location>
        <begin position="6841"/>
        <end position="6958"/>
    </location>
</feature>
<feature type="coiled-coil region" evidence="1">
    <location>
        <begin position="7009"/>
        <end position="7080"/>
    </location>
</feature>
<feature type="coiled-coil region" evidence="1">
    <location>
        <begin position="7145"/>
        <end position="7215"/>
    </location>
</feature>
<feature type="coiled-coil region" evidence="1">
    <location>
        <begin position="7250"/>
        <end position="7366"/>
    </location>
</feature>
<feature type="coiled-coil region" evidence="1">
    <location>
        <begin position="7444"/>
        <end position="7502"/>
    </location>
</feature>
<feature type="coiled-coil region" evidence="1">
    <location>
        <begin position="7565"/>
        <end position="7685"/>
    </location>
</feature>
<feature type="coiled-coil region" evidence="1">
    <location>
        <begin position="7744"/>
        <end position="7861"/>
    </location>
</feature>
<feature type="coiled-coil region" evidence="1">
    <location>
        <begin position="7912"/>
        <end position="7983"/>
    </location>
</feature>
<feature type="coiled-coil region" evidence="1">
    <location>
        <begin position="8048"/>
        <end position="8118"/>
    </location>
</feature>
<feature type="coiled-coil region" evidence="1">
    <location>
        <begin position="8153"/>
        <end position="8204"/>
    </location>
</feature>
<feature type="coiled-coil region" evidence="1">
    <location>
        <begin position="8273"/>
        <end position="8329"/>
    </location>
</feature>
<feature type="coiled-coil region" evidence="1">
    <location>
        <begin position="8370"/>
        <end position="8390"/>
    </location>
</feature>
<feature type="compositionally biased region" description="Low complexity" evidence="4">
    <location>
        <begin position="159"/>
        <end position="190"/>
    </location>
</feature>
<feature type="compositionally biased region" description="Basic and acidic residues" evidence="4">
    <location>
        <begin position="3010"/>
        <end position="3019"/>
    </location>
</feature>
<feature type="compositionally biased region" description="Basic and acidic residues" evidence="4">
    <location>
        <begin position="3913"/>
        <end position="3922"/>
    </location>
</feature>
<feature type="compositionally biased region" description="Basic and acidic residues" evidence="4">
    <location>
        <begin position="4372"/>
        <end position="4393"/>
    </location>
</feature>
<feature type="compositionally biased region" description="Basic and acidic residues" evidence="4">
    <location>
        <begin position="4867"/>
        <end position="4876"/>
    </location>
</feature>
<feature type="compositionally biased region" description="Basic and acidic residues" evidence="4">
    <location>
        <begin position="5770"/>
        <end position="5779"/>
    </location>
</feature>
<feature type="compositionally biased region" description="Basic and acidic residues" evidence="4">
    <location>
        <begin position="6673"/>
        <end position="6682"/>
    </location>
</feature>
<feature type="compositionally biased region" description="Basic and acidic residues" evidence="4">
    <location>
        <begin position="7576"/>
        <end position="7585"/>
    </location>
</feature>
<feature type="compositionally biased region" description="Acidic residues" evidence="4">
    <location>
        <begin position="8401"/>
        <end position="8411"/>
    </location>
</feature>
<feature type="compositionally biased region" description="Basic and acidic residues" evidence="4">
    <location>
        <begin position="8451"/>
        <end position="8464"/>
    </location>
</feature>
<feature type="sequence conflict" description="In Ref. 1; DAA04553." evidence="11" ref="1">
    <original>K</original>
    <variation>N</variation>
    <location>
        <position position="7849"/>
    </location>
</feature>
<gene>
    <name evidence="14" type="primary">anc-1</name>
    <name evidence="14" type="ORF">ZK973.6</name>
</gene>
<evidence type="ECO:0000255" key="1"/>
<evidence type="ECO:0000255" key="2">
    <source>
        <dbReference type="PROSITE-ProRule" id="PRU00044"/>
    </source>
</evidence>
<evidence type="ECO:0000255" key="3">
    <source>
        <dbReference type="PROSITE-ProRule" id="PRU00385"/>
    </source>
</evidence>
<evidence type="ECO:0000256" key="4">
    <source>
        <dbReference type="SAM" id="MobiDB-lite"/>
    </source>
</evidence>
<evidence type="ECO:0000269" key="5">
    <source>
    </source>
</evidence>
<evidence type="ECO:0000269" key="6">
    <source>
    </source>
</evidence>
<evidence type="ECO:0000269" key="7">
    <source>
    </source>
</evidence>
<evidence type="ECO:0000269" key="8">
    <source>
    </source>
</evidence>
<evidence type="ECO:0000269" key="9">
    <source>
    </source>
</evidence>
<evidence type="ECO:0000303" key="10">
    <source>
    </source>
</evidence>
<evidence type="ECO:0000305" key="11"/>
<evidence type="ECO:0000305" key="12">
    <source>
    </source>
</evidence>
<evidence type="ECO:0000305" key="13">
    <source>
    </source>
</evidence>
<evidence type="ECO:0000312" key="14">
    <source>
        <dbReference type="WormBase" id="ZK973.6a"/>
    </source>
</evidence>
<dbReference type="EMBL" id="AY157938">
    <property type="protein sequence ID" value="AAN35200.1"/>
    <property type="molecule type" value="mRNA"/>
</dbReference>
<dbReference type="EMBL" id="BK000642">
    <property type="protein sequence ID" value="DAA04553.1"/>
    <property type="molecule type" value="mRNA"/>
</dbReference>
<dbReference type="EMBL" id="BX284601">
    <property type="protein sequence ID" value="CCD73568.1"/>
    <property type="molecule type" value="Genomic_DNA"/>
</dbReference>
<dbReference type="EMBL" id="AY126454">
    <property type="protein sequence ID" value="AAM95163.1"/>
    <property type="molecule type" value="mRNA"/>
</dbReference>
<dbReference type="PIR" id="T33140">
    <property type="entry name" value="T33140"/>
</dbReference>
<dbReference type="PIR" id="T33141">
    <property type="entry name" value="T33141"/>
</dbReference>
<dbReference type="RefSeq" id="NP_491353.2">
    <property type="nucleotide sequence ID" value="NM_058952.5"/>
</dbReference>
<dbReference type="SMR" id="Q9N4M4"/>
<dbReference type="BioGRID" id="37504">
    <property type="interactions" value="29"/>
</dbReference>
<dbReference type="FunCoup" id="Q9N4M4">
    <property type="interactions" value="1854"/>
</dbReference>
<dbReference type="STRING" id="6239.ZK973.6a.1"/>
<dbReference type="iPTMnet" id="Q9N4M4"/>
<dbReference type="PaxDb" id="6239-ZK973.6"/>
<dbReference type="PeptideAtlas" id="Q9N4M4"/>
<dbReference type="EnsemblMetazoa" id="ZK973.6a.1">
    <property type="protein sequence ID" value="ZK973.6a.1"/>
    <property type="gene ID" value="WBGene00000140"/>
</dbReference>
<dbReference type="GeneID" id="172034"/>
<dbReference type="KEGG" id="cel:CELE_ZK973.6"/>
<dbReference type="UCSC" id="ZK973.6">
    <property type="organism name" value="c. elegans"/>
</dbReference>
<dbReference type="AGR" id="WB:WBGene00000140"/>
<dbReference type="CTD" id="172034"/>
<dbReference type="WormBase" id="ZK973.6a">
    <property type="protein sequence ID" value="CE33588"/>
    <property type="gene ID" value="WBGene00000140"/>
    <property type="gene designation" value="anc-1"/>
</dbReference>
<dbReference type="eggNOG" id="KOG0516">
    <property type="taxonomic scope" value="Eukaryota"/>
</dbReference>
<dbReference type="GeneTree" id="ENSGT00940000173830"/>
<dbReference type="HOGENOM" id="CLU_222729_0_0_1"/>
<dbReference type="InParanoid" id="Q9N4M4"/>
<dbReference type="OMA" id="ISNEQPM"/>
<dbReference type="OrthoDB" id="18740at2759"/>
<dbReference type="PhylomeDB" id="Q9N4M4"/>
<dbReference type="PRO" id="PR:Q9N4M4"/>
<dbReference type="Proteomes" id="UP000001940">
    <property type="component" value="Chromosome I"/>
</dbReference>
<dbReference type="Bgee" id="WBGene00000140">
    <property type="expression patterns" value="Expressed in pharyngeal muscle cell (C elegans) and 4 other cell types or tissues"/>
</dbReference>
<dbReference type="ExpressionAtlas" id="Q9N4M4">
    <property type="expression patterns" value="baseline and differential"/>
</dbReference>
<dbReference type="GO" id="GO:0005737">
    <property type="term" value="C:cytoplasm"/>
    <property type="evidence" value="ECO:0000314"/>
    <property type="project" value="WormBase"/>
</dbReference>
<dbReference type="GO" id="GO:0005856">
    <property type="term" value="C:cytoskeleton"/>
    <property type="evidence" value="ECO:0007669"/>
    <property type="project" value="UniProtKB-SubCell"/>
</dbReference>
<dbReference type="GO" id="GO:0005635">
    <property type="term" value="C:nuclear envelope"/>
    <property type="evidence" value="ECO:0000314"/>
    <property type="project" value="WormBase"/>
</dbReference>
<dbReference type="GO" id="GO:0005640">
    <property type="term" value="C:nuclear outer membrane"/>
    <property type="evidence" value="ECO:0007669"/>
    <property type="project" value="UniProtKB-SubCell"/>
</dbReference>
<dbReference type="GO" id="GO:0048471">
    <property type="term" value="C:perinuclear region of cytoplasm"/>
    <property type="evidence" value="ECO:0000314"/>
    <property type="project" value="WormBase"/>
</dbReference>
<dbReference type="GO" id="GO:0003779">
    <property type="term" value="F:actin binding"/>
    <property type="evidence" value="ECO:0000250"/>
    <property type="project" value="WormBase"/>
</dbReference>
<dbReference type="GO" id="GO:0019894">
    <property type="term" value="F:kinesin binding"/>
    <property type="evidence" value="ECO:0000318"/>
    <property type="project" value="GO_Central"/>
</dbReference>
<dbReference type="GO" id="GO:0051087">
    <property type="term" value="F:protein-folding chaperone binding"/>
    <property type="evidence" value="ECO:0007669"/>
    <property type="project" value="InterPro"/>
</dbReference>
<dbReference type="GO" id="GO:0007010">
    <property type="term" value="P:cytoskeleton organization"/>
    <property type="evidence" value="ECO:0000315"/>
    <property type="project" value="UniProtKB"/>
</dbReference>
<dbReference type="GO" id="GO:0007097">
    <property type="term" value="P:nuclear migration"/>
    <property type="evidence" value="ECO:0000318"/>
    <property type="project" value="GO_Central"/>
</dbReference>
<dbReference type="GO" id="GO:0051647">
    <property type="term" value="P:nucleus localization"/>
    <property type="evidence" value="ECO:0000315"/>
    <property type="project" value="WormBase"/>
</dbReference>
<dbReference type="GO" id="GO:0006997">
    <property type="term" value="P:nucleus organization"/>
    <property type="evidence" value="ECO:0000315"/>
    <property type="project" value="WormBase"/>
</dbReference>
<dbReference type="GO" id="GO:0035046">
    <property type="term" value="P:pronuclear migration"/>
    <property type="evidence" value="ECO:0000315"/>
    <property type="project" value="WormBase"/>
</dbReference>
<dbReference type="FunFam" id="1.10.418.10:FF:000037">
    <property type="entry name" value="nesprin-1 isoform X1"/>
    <property type="match status" value="1"/>
</dbReference>
<dbReference type="FunFam" id="1.10.418.10:FF:000099">
    <property type="entry name" value="Nuclear anchorage protein 1"/>
    <property type="match status" value="1"/>
</dbReference>
<dbReference type="Gene3D" id="1.10.418.10">
    <property type="entry name" value="Calponin-like domain"/>
    <property type="match status" value="2"/>
</dbReference>
<dbReference type="InterPro" id="IPR001589">
    <property type="entry name" value="Actinin_actin-bd_CS"/>
</dbReference>
<dbReference type="InterPro" id="IPR003103">
    <property type="entry name" value="BAG_domain"/>
</dbReference>
<dbReference type="InterPro" id="IPR001715">
    <property type="entry name" value="CH_dom"/>
</dbReference>
<dbReference type="InterPro" id="IPR036872">
    <property type="entry name" value="CH_dom_sf"/>
</dbReference>
<dbReference type="InterPro" id="IPR012315">
    <property type="entry name" value="KASH"/>
</dbReference>
<dbReference type="PANTHER" id="PTHR21524">
    <property type="entry name" value="SPECTRIN REPEAT CONTAINING NUCLEAR ENVELOPE PROTEIN 2"/>
    <property type="match status" value="1"/>
</dbReference>
<dbReference type="PANTHER" id="PTHR21524:SF5">
    <property type="entry name" value="SPECTRIN REPEAT CONTAINING NUCLEAR ENVELOPE PROTEIN 2"/>
    <property type="match status" value="1"/>
</dbReference>
<dbReference type="Pfam" id="PF24531">
    <property type="entry name" value="ANC1_spectrin"/>
    <property type="match status" value="6"/>
</dbReference>
<dbReference type="Pfam" id="PF00307">
    <property type="entry name" value="CH"/>
    <property type="match status" value="2"/>
</dbReference>
<dbReference type="Pfam" id="PF10541">
    <property type="entry name" value="KASH"/>
    <property type="match status" value="1"/>
</dbReference>
<dbReference type="Pfam" id="PF24611">
    <property type="entry name" value="Spectrin_Anc-1"/>
    <property type="match status" value="6"/>
</dbReference>
<dbReference type="Pfam" id="PF24615">
    <property type="entry name" value="Spectrin_Anc-1_2"/>
    <property type="match status" value="6"/>
</dbReference>
<dbReference type="SMART" id="SM00264">
    <property type="entry name" value="BAG"/>
    <property type="match status" value="6"/>
</dbReference>
<dbReference type="SMART" id="SM00033">
    <property type="entry name" value="CH"/>
    <property type="match status" value="2"/>
</dbReference>
<dbReference type="SMART" id="SM01249">
    <property type="entry name" value="KASH"/>
    <property type="match status" value="1"/>
</dbReference>
<dbReference type="SUPFAM" id="SSF47576">
    <property type="entry name" value="Calponin-homology domain, CH-domain"/>
    <property type="match status" value="1"/>
</dbReference>
<dbReference type="PROSITE" id="PS00019">
    <property type="entry name" value="ACTININ_1"/>
    <property type="match status" value="1"/>
</dbReference>
<dbReference type="PROSITE" id="PS00020">
    <property type="entry name" value="ACTININ_2"/>
    <property type="match status" value="1"/>
</dbReference>
<dbReference type="PROSITE" id="PS50021">
    <property type="entry name" value="CH"/>
    <property type="match status" value="2"/>
</dbReference>
<dbReference type="PROSITE" id="PS51049">
    <property type="entry name" value="KASH"/>
    <property type="match status" value="1"/>
</dbReference>
<reference key="1">
    <citation type="journal article" date="2002" name="Science">
        <title>Role of ANC-1 in tethering nuclei to the actin cytoskeleton.</title>
        <authorList>
            <person name="Starr D.A."/>
            <person name="Han M."/>
        </authorList>
    </citation>
    <scope>NUCLEOTIDE SEQUENCE [MRNA] OF 1-1751</scope>
    <scope>IDENTIFICATION OF COMPLETE SEQUENCE</scope>
    <scope>FUNCTION</scope>
    <scope>INTERACTION WITH F-ACTIN AND UNC-84</scope>
    <scope>SUBCELLULAR LOCATION</scope>
    <scope>TISSUE SPECIFICITY</scope>
    <scope>DOMAIN</scope>
    <scope>DEVELOPMENTAL STAGE</scope>
    <source>
        <strain>Bristol N2</strain>
    </source>
</reference>
<reference key="2">
    <citation type="journal article" date="1998" name="Science">
        <title>Genome sequence of the nematode C. elegans: a platform for investigating biology.</title>
        <authorList>
            <consortium name="The C. elegans sequencing consortium"/>
        </authorList>
    </citation>
    <scope>NUCLEOTIDE SEQUENCE [LARGE SCALE GENOMIC DNA]</scope>
    <source>
        <strain>Bristol N2</strain>
    </source>
</reference>
<reference key="3">
    <citation type="journal article" date="2002" name="Genomics">
        <title>The nesprins are giant actin-binding proteins, orthologous to Drosophila melanogaster muscle protein MSP-300.</title>
        <authorList>
            <person name="Zhang Q."/>
            <person name="Ragnauth C."/>
            <person name="Greener M.J."/>
            <person name="Shanahan C.M."/>
            <person name="Roberts R.G."/>
        </authorList>
    </citation>
    <scope>NUCLEOTIDE SEQUENCE [MRNA] OF 689-1243</scope>
</reference>
<reference key="4">
    <citation type="journal article" date="1982" name="Cell">
        <title>A gene required for nuclear and mitochondrial attachment in the nematode Caenorhabditis elegans.</title>
        <authorList>
            <person name="Hedgecock E.M."/>
            <person name="Thomson J.N."/>
        </authorList>
    </citation>
    <scope>FUNCTION</scope>
    <scope>DISRUPTION PHENOTYPE</scope>
</reference>
<reference key="5">
    <citation type="journal article" date="1999" name="Development">
        <title>UNC-84 localizes to the nuclear envelope and is required for nuclear migration and anchoring during C. elegans development.</title>
        <authorList>
            <person name="Malone C.J."/>
            <person name="Fixsen W.D."/>
            <person name="Horvitz H.R."/>
            <person name="Han M."/>
        </authorList>
    </citation>
    <scope>FUNCTION</scope>
</reference>
<reference key="6">
    <citation type="journal article" date="2005" name="Novartis Found. Symp.">
        <title>A genetic approach to study the role of nuclear envelope components in nuclear positioning.</title>
        <authorList>
            <person name="Starr D.A."/>
            <person name="Han M."/>
        </authorList>
    </citation>
    <scope>FUNCTION</scope>
    <scope>SUBCELLULAR LOCATION</scope>
</reference>
<reference key="7">
    <citation type="journal article" date="2012" name="Genetics">
        <title>Neural maintenance roles for the matrix receptor dystroglycan and the nuclear anchorage complex in Caenorhabditis elegans.</title>
        <authorList>
            <person name="Johnson R.P."/>
            <person name="Kramer J.M."/>
        </authorList>
    </citation>
    <scope>FUNCTION</scope>
    <scope>DISRUPTION PHENOTYPE</scope>
</reference>
<comment type="function">
    <text evidence="5 6 8 9 10">Plays a central role in nuclear and mitochondrial anchoring (PubMed:10375507, PubMed:12169658, PubMed:22298703, PubMed:6889924). Probably connects nuclei to the cytoskeleton by interacting with unc-84 at the nuclear envelope and with F-actin in the cytoplasm, creating a bridge across the nuclear envelope between the cytoskeleton and the nucleus (PubMed:15773756). Has a role in positioning of the cell body of the PVQ lumbar interneuron (PubMed:22298703).</text>
</comment>
<comment type="subunit">
    <text evidence="6">Interacts with F-actin via its N-terminal domain. Most likely interacts with unc-84; the interaction is probably required to recruit anc-1 to the nuclear envelope.</text>
</comment>
<comment type="subcellular location">
    <subcellularLocation>
        <location evidence="7 12">Nucleus outer membrane</location>
        <topology evidence="11">Single-pass type IV membrane protein</topology>
        <orientation evidence="11">Cytoplasmic side</orientation>
    </subcellularLocation>
    <subcellularLocation>
        <location evidence="13">Cytoplasm</location>
        <location evidence="13">Cytoskeleton</location>
    </subcellularLocation>
    <text evidence="12">The largest part of the protein is cytoplasmic, while its C-terminal part is associated either with the nuclear envelope, most probably the outer nuclear membrane, or with mitochondrial membrane.</text>
</comment>
<comment type="tissue specificity">
    <text evidence="6">Ubiquitously expressed in all postembryonic cells.</text>
</comment>
<comment type="developmental stage">
    <text evidence="6">First expressed in L1 larvae, and thereafter throughout adulthood.</text>
</comment>
<comment type="domain">
    <text evidence="6">The large coiled coil domains are composed of 6 nearly exact repeats of 903 residues. The last repeat is partial. These repeats are conserved in Hawaii (CB4856), Australia (AB4) and Germany (RC301) strains. The length of the repeat may be maintained because of a selective advantage to keep the protein large and allow a single molecule to extend more than 0.5 micrometers.</text>
</comment>
<comment type="domain">
    <text>The KASH domain, which contains a potential transmembrane domain, is essential for the nuclear envelope targeting.</text>
</comment>
<comment type="disruption phenotype">
    <text evidence="8 9">Nuclear anchorage is lost resulting in free-floating nuclei that often cluster as the animal flexes. An increase in PVQ cell bodies mispositioned to the anterior is apparent between three-fold embryos and L1 larvae. Pharyngeal cells show defects including mispositioned organelles.</text>
</comment>
<comment type="similarity">
    <text evidence="11">Belongs to the nesprin family.</text>
</comment>
<name>ANC1_CAEEL</name>
<proteinExistence type="evidence at protein level"/>
<accession>Q9N4M4</accession>
<accession>O61841</accession>
<accession>O61842</accession>
<accession>Q6IMP3</accession>
<sequence length="8545" mass="956482">MSSSPPARPCCVCFRFRPHEDEKAQKNTFTRWINFHLEEHSSSGRIEDLFEDIRDGVLLCHLIEVLTGEALAVHKGRVSKRVHHIANLTTALTVLRRRGLELINNNAADIADGNPRIVLGLIWQIILHFQIETNMILLREWGWAATGTEEPTSSAQPEVVVTAPSPTPSSKKSHSKVSSLSGSKTSLASGEKAPSSPLRQRIASFLTPTKKAPKLTAQPVKQSVEQVFLRWINAEIGDLVGGRRVENMDKQWRDGILFCALVSRWRPDVISMREVTNANPRDNLELAFNLAHQHLGVRRLLAVEDMMIEKPDKRSVITYVSQFVRMFGERSPMQGREQHEIFLAWLEATYLLCTRHELNSQECSRIRREFIEHRPLFNTIIVTKVNYDVEELVEIEKKWDCIRETLEKYARRSERDLPEPFASIATWIAGAEHILSRPLDLDATDAKKTVTMLQKLISEHQKYMEDLPKRQEDFEEAVKHGGLGGRPVAPEFSEPLRARFAQIEEENEPRISTLRILTTHYILLQYLQHIDEKIILWRTADSVTLLLRWIKEYTQLNAENPQAKCASYINKITLTMANDQNSKLDKEAILNTSNEKTAETLKRFESLWIELKLLKVEWVEWETHVSQLEEIIEERRRNGVPPTPEDEQALAVITAGADQLAPKLGASARLSNNQRLDVLTHSFKKLTKTTIKIGGRLVVELEPSTSEQASKISYSWQASDELLKVEMQLRDRIQRDADSSDREQLEYRAETFRNIRDKLIELERLNEIYDNHSRDQVDTPNRNLIRHDMGTIIYGLQAGQYANFVDLSCYAFVYDEYNQVPVNLTENVLSEDYVREIVNRKKAILTRRENNEDEIRESIRDMEECDRIIEGWQSTEIEELRAEWNIKLSEFESWHEMMQQVEVLSQTIQTRLDVTVIQTIWILKERSYDIKHSELGGTLRESLEQLATTSETSVNRHLQNLELSNEQDCPDAIEFLEEVGRESVSKLSAAVDDRYIYTLHVLRTKMELFRRLQNFCDAVKILRSQNTKWNGIKISQIDQVQSEIDTLIVRLDEEWTQDANQLRAELASIHGSFFQLEFDRLNEKLNMLIHDKDKLRELMVHRRHYLTAANELITDSKTDLAQRATSSDHPDDILRATDEVTKALDIKGEELRRLGELAEMNITDLVVVALILSFRRRQLGSEGEPEVEELRRALREIIARPITEPRDVSPDAIVADILRMKDEKKRDEKTIDEIQATTLTDEQRASFAPLIEDYRRRADRHRIVFEHLVMIYLDWLSRQFDELEDEIGMTIQTSRADDLRRMNSTEWNKWKTDLANIERQVGPDTKKALSAELADLHRKRDSMEARINKYLTHSAKINAKLTQFEKWLNAIEEDIEQTERQFEDPERSYRFGSLHEVALAKQRLVAKLERLNVANKEEVLRLCERYHTIMHKLTPFQTAVGLPLHVSTNLDRNGPFQSQISVSSIASSELERPESVMSLTSSIGVIPADVAELSPFEAKINKLLQKLHIIEDSYLKGPKPIDTVREDVKQLEKYRNRGAEILQQLSTSNIEDAEKEGLKHRFVLMLNNYDDILRSIENEIRDDNELTAKNQEILAELSNAEQTLQNSPLEDLDISAELDRLQMQLDLVKVMCNKPRKYVECELIDSSREGSPQERRRRKKKVMVMVSNTITTIIHVVEERLEASDISRNPDVQQKLVAVKENLRELDTTTVTPHPPSIMSPLGTENRNDLEEVKRLAAEIDRAIDTASSMYEDAPTDEDALKSAIHLLDDQKVTLNHLHVVLEGIPEKNEQDRTDAIDIASSVGEKLGNLKSAVEEVYEEVLASTNPVKEDQPLQHIQEVQTTPAEQSNWDTDEFSRQPPVLSDERIELKTDPSAIDKFEVRSDEDPVPKIIDLFGQLQTAVNEASPLACEGTDDVDALQVASDKLTKQDRTIRKIHAILDTIDDPVQKPAIIESLDKIKDQINNARDNINRQIDNLNYNQTPVVVPKESTKTPLNEIEDAVRQASTVVSDELCNTEKLLSARQTLANVKPQVDSVEANVWSNPETIETVTPILEEYTTLVDNIEKKLANEIEVPTNDPSRQDLVQQLQDVILECEEVVVNCDNIEKLEESKLKLEKARPLLDQIGDNVEKLSREQSPDTSDAIDALSNVHQQYNATIMSIDDKIDELKNPEEDTSAADQLISELHVISEMPAVTIDLSMLNAIEEGLSTLPAHQAENVQAKIDELRQKKEVADQTEQILSDLNAFGDMPAITLDLDLLKSVEDGIAVLPVEDSERIKAKIVDLRKKKEDADQAEALLQELSVISDMPISTLDLNMLQGIEDNLNSLPAEESDEIREKLNELRRRKQESDQAEALLQELSVISDMPISTLDLNMLQGVEDNLNSLPTEEADKIREKINDLRRRKQESDLAEALLQELSVIYDMPTSTIDLNMLQGIEDNLNSLPAEESDKIREKINDLRRRKQESDLAEALLQELSVIYDMPTSTIDLNMLQGIEDNLNSLPAEESDKIREKINDLRRRKQESDQAEALLQELSVVSDMPASTIDINMLQSIEDGLSTLLSEDRSKIQQAIDSLRKKKSDSDLAQHALEALSVQSKLPSVSINLEELKKLEETLSTVPVEDSKVIRDKIAELKTEKALADHAENYLVELKKIEDMPISAVGSDVLATIEDQILQMPVQYQPSVKETLDKLKQAKEEDDKLAGVYDELEKIAKLPARDYDNKLLAKIDEKLNSLPKDQIAETHRKVEDIKVTKADIVAQIDVLDKLPAKDIDEHLLNSIEEKLPTIPSDSSDQLQIAIGKLRDRKQANIDEGKKILNELAEIQKMPADSLNEHALNLLATESDKFGSEISDKIMQEIDVLREKQNNHEVARLNAESVLQQLDKISEEPHLSLTEERLAPFLQNIDTVPACFVDKIRNKINEVQKLHDEAVQDEKDELKEKLVAKVQNIGKTSIDDVNVSDFEEIEREINGSLEAFEAEPLLAKIQELREAKRVGDEARSAAHDQIVALEKEAEDVTAKESAKKKKKDKKKSPQEMIDELSAKVVEAKALIPKIEEAAKNENLPADDKPKAEQLVSNLEAFVKDVETQVSEKQDELDKLNNANDAIKRLGDALDDAEKTVVPSSVPALSEFKDRIAPHLATLVEAVNDVPASVEPSAVALRDRAAKFVSDLEKNIQKTGDDEKRADELKNDVGNAVKNVEDVVSKYQNQPQPLDVAKDDANKLKATVEQLTKLAESSDKIDPQVAKDIKDSKTKAKELLQALEKAIPQEDAIRREQAEINDRLNNLEKELTKVDEFKPEDALPIVDQLAANTNTLKTATDSNNEKAVAPSSLISHDDLVVGLPEKVFQLQHAIDDKKQALNKAAAVNEIAPKLQLVSQQLQSVPQEVPASLDEQKQLLEDVENQKHNLENLLANLPENDPTADELRQKSQWDLSRLKDLLKQLGSAVGDKLAALAAFNAARKNAEDALLDITREDGGDDNKSPDELIDDLAKKEETVAKLLDTVSGVKPDELDDKERAEYNDLLARLATAADVLKNKRAELEQAVKAKADEKSLHDSVDRIVSRLVPLVRESDELRHNAEAVPTQYAPKAEELKKEVEAAKAVIANAPSSDAHVQQLEQAVATAETLIPDLEERARLWNEFLAARNDIDALIEQLQQPLDAVLAQPKRSAEEAAQDVENLRNNSQQLSDLDNKIANLQRISELLDPLESAYADVRFFDVDAEQTRHQYDDVLNDVAAELEDETLLKQSASQVANEIDDISKMIDSTDPERSILDTIAKSDIPALKAQINRIKDRIVNADASRKHVTTDPKIAEDLDNKLAKLQTELDDAIKTSDEHDKEQLILSLKLNISQFEQIPLDQLKSDDLKTAEKEITNSLKPEEAEPLLAKIQELREAKRVGDEARSAAHDQIVALEKEAEDVTAKESAKKKKKDKKKSPQEMIDELSAKVVEAKALIPKIEEAAKNENLPADDKPKAEQLVSNLEAFVKDVETQVSEKQDELDKLNNANDAIKRLGDALDDAEKTVVPSSVPALSEFKDRIAPHLATLVEAVNDVPASVEPSAVALRDRAAKFVSDLEKNIQKTGDDEKRADELKNDDGNAVKNVEDVVSKYQNQPQPLDVAKDDANKLKATVEQLTKLAESSDKIDPQVAKDIKDSKTKAKELLQALEKAIPQEDAIRREQAEINDRLNNLEKELTKVDEFKPEDALPIVDQLAANTNTLKTATDSNNEKAVAPSSLISHDDLVVGLPEKVFQLQHAIDDKKQALNKAAAVNEIAPKLQLVSQQLQSVPQEVPASLDEQKQLLEDVENQKHNLENLLANLPENDPTADELRQKSQWDLSRLKDLLKQLGSAVGDKLAALAAFNAARKNAEDALLDITREDGGDDNKSPDELIDDRGRSTGSAVGDKLAALAAFNAARKNAEDALLDITREDGGDDNKSPDELIDDLAKKEETVAKLLDTVSGVKPDELDDKERAEYNDLLARLATAADVLKNKRAELEQAVKAKADEKSLHDSVDRIVSRLVPLVRESDELRHNAEAVPTQYAPKAEELKKEVEAAKAVIANAPSSDAHVQQLEQAVATAETLIPDLEERARLWNEFLAARNDIDALIEQLQQPLDAVLAQPKRSAEEAAQDVENLRNNSQQLSDLDNKIANLQRISELLDPLESAYADVRFFDVDAEQTRHQYDDVLNDVAAELEDETLLKQSASQVANEIDDISKMIDSTDPERSILDTIAKSDIPALKAQINRIKDRIVNADASRKHVTTDPKIAEDLDNKLAKLQTELDDAIKTSDEHDKEQLILSLKLNISQFEQIPLDQLKSDDLKTAEKEITNSLKPEEAEPLLAKIQELREAKRVGDEARSAAHDQIVALEKEAEDVTAKESAKKKKKDKKKSPQEMIDELSAKVVEAKALIPKIEEAAKNENLPADDKPKAEQLVSNLEAFVKDVETQVSEKQDELDKLNNANDAIKRLGDALDDAEKTVVPSSVPALSEFKDRIAPHLATLVEAVNDVPASVEPSAVALRDRAAKFVSDLEKNIQKTGDDEKRADELKNDVGNAVKNVEDVVSKYQNQPQPLDVAKDDANKLKATVEQLTKLAESSDKIDPQVAKDIKDSKTKAKELLQALEKAIPQEDAIRREQAEINDRLNNLEKELTKVDEFKPEDALPIVDQLAANTNTLKTATDSNNEKAVAPSSLISHDDLVVGLPEKVFQLQHAIDDKKQALNKAAAVNEIAPKLQLVSQQLQSVPQEVPASLDEQKQLLEDVENQKHNLENLLANLPENDPTADELRQKSQWDLSRLKDLLKQLGSAVGDKLAALAAFNAARKNAEDALLDITREDGGDDNKSPDELIDDLAKKEETVAKLLDTVSGVKPDELDDKERAEYNDLLARLATAADVLKNKRAELEQAVKAKADEKSLHDSVDRIVSRLVPLVRESDELRHNAEAVPTQYAPKAEELKKEVEAAKAVIANAPSSDAHVQQLEQAVATAETLIPDLEERARLWNEFLAARNDIDALIEQLQQPLDAVLAQPKRSAEEAAQDVENLRNNSQQLSDLDNKIANLQRISELLDPLESAYADVRFFDVDAEQTRHQYDDVLNDVAAELEDETLLKQSASQVANEIDDISKMIDSTDPERSILDTIAKSDIPALKAQINRIKDRIVNADASRKHVTTDPKIAEDLDNKLAKLQTELDDAIKTSDEHDKEQLILSLKLNISQFEQIPLDQLKSDDLKTAEKEITNSLKPEEAEPLLAKIQELREAKRVGDEARSAAHDQIVALEKEAEDVTAKESAKKKKKDKKKSPQEMIDELSAKVVEAKALIPKIEEAAKNENLPADDKPKAEQLVSNLEAFVKDVETQVSEKQDELDKLNNANDAIKRLGDALDDAEKTVVPSSVPALSEFKDRIAPHLATLVEAVNDVPASVEPSAVALRDRAAKFVSDLEKNIQKTGDDEKRADELKNDVGNAVKNVEDVVSKYQNQPQPLDVAKDDANKLKATVEQLTKLAESSDKIDPQVAKDIKDSKTKAKELLQALEKAIPQEDAIRREQAEINDRLNNLEKELTKVDEFKPEDALPIVDQLAANTNTLKTATDSNNEKAVAPSSLISHDDLVVGLPEKVFQLQHAIDDKKQALNKAAAVNEIAPKLQLVSQQLQSVPQEVPASLDEQKQLLEDVENQKHNLENLLANLPENDPTADELRQKSQWDLSRLKDLLKQLGSAVGDKLAALAAFNAARKNAEDALLDITREDGGDDNKSPDELIDDLAKKEETVAKLLDTVSGVKPDELDDKERAEYNDLLARLATAADVLKNKRAELEQAVKAKADEKSLHDSVDRIVSRLVPLVRESDELRHNAEAVPTQYAPKAEELKKEVEAAKAVIANAPSSDAHVQQLEQAVATAETLIPDLEERARLWNEFLAARNDIDALIEQLQQPLDAVLAQPKRSAEEAAQDVENLRNNSQQLSDLDNKIANLQRISELLDPLESAYADVRFFDVDAEQTRHQYDDVLNDVAAELEDETLLKQSASQVANEIDDISKMIDSTDPERSILDTIAKSDIPALKAQINRIKDRIVNADASRKHVTTDPKIAEDLDNKLAKLQTELDDAIKTSDEHDKEQLILSLKLNISQFEQIPLDQLKSDDLKTAEKEITNSLKPEEAEPLLAKIQELREAKRVGDEARSAAHDQIVALEKEAEDVTAKESAKKKKKDKKKSPQEMIDELSAKVVEAKALIPKIEEAAKNENLPADDKPKAEQLVSNLEAFVKDVETQVSEKQDELDKLNNANDAIKRLGDALDDAEKTVVPSSVPALSEFKDRIAPHLATLVEAVNDVPASVEPSAVALRDRAAKFVSDLEKNIQKTGDDEKRADELKNDVGNAVKNVEDVVSKYQNQPQPLDVAKDDANKLKATVEQLTKLAESSDKIDPQVAKDIKDSKTKAKELLQALEKAIPQEDAIRREQAEINDRLNNLEKELTKVDEFKPEDALPIVDQLAANTNTLKTATDSNNEKAVAPSSLISHDDLVVGLPEKVFQLQHAIDDKKQALNKAAAVNEIAPKLQLVSQQLQSVPQEVPASLDEQKQLLEDVENQKHNLENLLANLPENDPTADELRQKSQWDLSRLKDLLKQLGSAVGDKLAALAAFNAARKNAEDALLDITREDGGDDNKSPDELIDDLAKKEETVAKLLDTVSGVKPDELDDKERAEYNDLLARLATAADVLKNKRAELEQAVKAKADEKSLHDSVDRIVSRLVPLVRESDELRHNAEAVPTQYAPKAEELKKEVEAAKAVIANAPSSDAHVQQLEQAVATAETLIPDLEERARLWNEFLAARNDIDALIEQLQQPLDAVLAQPKRSAEEAAQDVENLRNNSQQLSDLDNKIANLQRISELLDPLESAYADVRFFDVDAEQTRHQYDDVLNDVAAELEDETLLKQSASQVANEIDDISKMIDSTDPERSILDTIAKSDIPALKAQINRIKDRIVNADASRKHVTTDPKIAEDLDNKLAKLQTELDDAIKTSDEHDKEQLILSLKLNISQFEQIPLDQLKSDDLKTAEKEITNSLKPEEAEPLLAKIQELREAKRVGDEARSAAHDQIVALEKEAEDVTAKESAKKKKKDKKKSPQEMIDELSAKVVEAKALIPKIEEAAKNENLPADDKPKAEQLVSNLEAFVKDVETQVSEKQDELDKLNNANDAIKRLGDALDDAEKTVVPSSVPALSEFKDRIAPHLATLVEAVNDVPASVEPSAVALRDRAAKFVSDLEKNIQKTGDDEKRADELKNDVGNAVKNVEDVVSKYQNQPQPLDVAKDDANKLKATVEQLTKLAESSDKIDPQVAKDIKDSKTKAKELLQALEKAIPQEDAIRREQAEINDRLNKLEKELTKVDEFKPEDALPIVDQLAANTNTLKTATDSNNEKAVAPSSLISHDDLVVGLPEKVFQLQHAIDDKKQALNKAAAVNEIAPKLQLVSQQLQSVPQEVPASLDEQKQLLEDVENQKHNLENLLANLPENDPTADELRQKSQWDLSRLKDLLKQLGSAVGEKLAALAAFNAARKNAEDALLDITREDGGDDNKSPDELIDDLAKKEETVAKLLDTVSGVKPDELDDKERAEYNDLLARLATAADVLKNKRAELEQAVKAKADEKSLHDSVDRIVSRLVPLVRESDELRHNAEAVPTQYAPKAEELKKEVEAAKAVIANAPSSDAHVQQLEQAVATAETLIPDLEERASIWERFVKAKDDLYDYLEKLENNVSDVLNRPRLPVSQAQQRFNKLKEQSYLLDRIRDLKIDFDDLGEALLPLTVAEDELRFMHVHVESIERQYEDTMDKLNAEITAEVELLRTLDILSNELSQCKEDINNPSVDVDELSRATMLNDAIAHLENQKVVVARSEKDRKFVESSTSIDLDQLLAEAKRLLKEIEPRLQLAQPDHDNEDDEDEEKGSDEKPYDVRAAAEVLSALYPDEHPHNVLRNIGFEELPSDSESRSEFDSLDSRSDGLLSPIPDDSTLSEEQLRRQRSRWRRVLRTALPLQALLVLLMGAACLVPHCDDEYCCQLLNNFAKSFDPSLEFVNGPPPF</sequence>
<protein>
    <recommendedName>
        <fullName>Nuclear anchorage protein 1</fullName>
        <shortName>Anchorage 1 protein</shortName>
    </recommendedName>
    <alternativeName>
        <fullName>Nesprin homolog</fullName>
    </alternativeName>
</protein>